<protein>
    <recommendedName>
        <fullName evidence="1">DNA/RNA-binding protein Alba</fullName>
    </recommendedName>
</protein>
<organism>
    <name type="scientific">Pyrococcus furiosus (strain ATCC 43587 / DSM 3638 / JCM 8422 / Vc1)</name>
    <dbReference type="NCBI Taxonomy" id="186497"/>
    <lineage>
        <taxon>Archaea</taxon>
        <taxon>Methanobacteriati</taxon>
        <taxon>Methanobacteriota</taxon>
        <taxon>Thermococci</taxon>
        <taxon>Thermococcales</taxon>
        <taxon>Thermococcaceae</taxon>
        <taxon>Pyrococcus</taxon>
    </lineage>
</organism>
<feature type="chain" id="PRO_0000151706" description="DNA/RNA-binding protein Alba">
    <location>
        <begin position="1"/>
        <end position="93"/>
    </location>
</feature>
<feature type="modified residue" description="N6-acetyllysine" evidence="1">
    <location>
        <position position="11"/>
    </location>
</feature>
<accession>Q8TZV1</accession>
<name>ALBA_PYRFU</name>
<keyword id="KW-0007">Acetylation</keyword>
<keyword id="KW-0158">Chromosome</keyword>
<keyword id="KW-0963">Cytoplasm</keyword>
<keyword id="KW-0226">DNA condensation</keyword>
<keyword id="KW-0238">DNA-binding</keyword>
<keyword id="KW-1185">Reference proteome</keyword>
<proteinExistence type="inferred from homology"/>
<dbReference type="EMBL" id="AE009950">
    <property type="protein sequence ID" value="AAL82005.1"/>
    <property type="molecule type" value="Genomic_DNA"/>
</dbReference>
<dbReference type="RefSeq" id="WP_011013020.1">
    <property type="nucleotide sequence ID" value="NZ_CP023154.1"/>
</dbReference>
<dbReference type="SMR" id="Q8TZV1"/>
<dbReference type="IntAct" id="Q8TZV1">
    <property type="interactions" value="1"/>
</dbReference>
<dbReference type="STRING" id="186497.PF1881"/>
<dbReference type="PaxDb" id="186497-PF1881"/>
<dbReference type="GeneID" id="41713701"/>
<dbReference type="KEGG" id="pfu:PF1881"/>
<dbReference type="PATRIC" id="fig|186497.12.peg.1952"/>
<dbReference type="eggNOG" id="arCOG01753">
    <property type="taxonomic scope" value="Archaea"/>
</dbReference>
<dbReference type="HOGENOM" id="CLU_110989_1_0_2"/>
<dbReference type="OrthoDB" id="10360at2157"/>
<dbReference type="PhylomeDB" id="Q8TZV1"/>
<dbReference type="Proteomes" id="UP000001013">
    <property type="component" value="Chromosome"/>
</dbReference>
<dbReference type="GO" id="GO:0005694">
    <property type="term" value="C:chromosome"/>
    <property type="evidence" value="ECO:0007669"/>
    <property type="project" value="UniProtKB-SubCell"/>
</dbReference>
<dbReference type="GO" id="GO:0005737">
    <property type="term" value="C:cytoplasm"/>
    <property type="evidence" value="ECO:0007669"/>
    <property type="project" value="UniProtKB-SubCell"/>
</dbReference>
<dbReference type="GO" id="GO:0003690">
    <property type="term" value="F:double-stranded DNA binding"/>
    <property type="evidence" value="ECO:0007669"/>
    <property type="project" value="UniProtKB-UniRule"/>
</dbReference>
<dbReference type="GO" id="GO:0003723">
    <property type="term" value="F:RNA binding"/>
    <property type="evidence" value="ECO:0007669"/>
    <property type="project" value="InterPro"/>
</dbReference>
<dbReference type="GO" id="GO:0030261">
    <property type="term" value="P:chromosome condensation"/>
    <property type="evidence" value="ECO:0007669"/>
    <property type="project" value="UniProtKB-KW"/>
</dbReference>
<dbReference type="Gene3D" id="3.30.110.20">
    <property type="entry name" value="Alba-like domain"/>
    <property type="match status" value="1"/>
</dbReference>
<dbReference type="HAMAP" id="MF_01122">
    <property type="entry name" value="AlbA"/>
    <property type="match status" value="1"/>
</dbReference>
<dbReference type="InterPro" id="IPR036882">
    <property type="entry name" value="Alba-like_dom_sf"/>
</dbReference>
<dbReference type="InterPro" id="IPR013795">
    <property type="entry name" value="DNA/RNA-bd_Alba"/>
</dbReference>
<dbReference type="InterPro" id="IPR002775">
    <property type="entry name" value="DNA/RNA-bd_Alba-like"/>
</dbReference>
<dbReference type="NCBIfam" id="TIGR00285">
    <property type="entry name" value="DNA-binding protein Alba"/>
    <property type="match status" value="1"/>
</dbReference>
<dbReference type="NCBIfam" id="NF003088">
    <property type="entry name" value="PRK04015.1"/>
    <property type="match status" value="1"/>
</dbReference>
<dbReference type="Pfam" id="PF01918">
    <property type="entry name" value="Alba"/>
    <property type="match status" value="1"/>
</dbReference>
<dbReference type="PIRSF" id="PIRSF028732">
    <property type="entry name" value="Alba"/>
    <property type="match status" value="1"/>
</dbReference>
<dbReference type="SUPFAM" id="SSF82704">
    <property type="entry name" value="AlbA-like"/>
    <property type="match status" value="1"/>
</dbReference>
<comment type="function">
    <text evidence="1">Binds double-stranded DNA tightly but without sequence specificity. Involved in DNA compaction.</text>
</comment>
<comment type="subcellular location">
    <subcellularLocation>
        <location evidence="1">Cytoplasm</location>
    </subcellularLocation>
    <subcellularLocation>
        <location evidence="1">Chromosome</location>
    </subcellularLocation>
</comment>
<comment type="PTM">
    <text evidence="1">Acetylated. Acetylation at Lys-11 decreases DNA-binding affinity.</text>
</comment>
<comment type="similarity">
    <text evidence="1">Belongs to the histone-like Alba family.</text>
</comment>
<evidence type="ECO:0000255" key="1">
    <source>
        <dbReference type="HAMAP-Rule" id="MF_01122"/>
    </source>
</evidence>
<gene>
    <name evidence="1" type="primary">albA</name>
    <name type="ordered locus">PF1881</name>
</gene>
<reference key="1">
    <citation type="journal article" date="1999" name="Genetics">
        <title>Divergence of the hyperthermophilic archaea Pyrococcus furiosus and P. horikoshii inferred from complete genomic sequences.</title>
        <authorList>
            <person name="Maeder D.L."/>
            <person name="Weiss R.B."/>
            <person name="Dunn D.M."/>
            <person name="Cherry J.L."/>
            <person name="Gonzalez J.M."/>
            <person name="DiRuggiero J."/>
            <person name="Robb F.T."/>
        </authorList>
    </citation>
    <scope>NUCLEOTIDE SEQUENCE [LARGE SCALE GENOMIC DNA]</scope>
    <source>
        <strain>ATCC 43587 / DSM 3638 / JCM 8422 / Vc1</strain>
    </source>
</reference>
<sequence>MAEEHVVYIGKKPVMNYVLAVITQFNEGAKEVSIKARGRAISRAVDVAEIVRNRFLKDTVDIKEIKIGTEELPTADGRTTNTSTIEIVLERKV</sequence>